<sequence length="221" mass="24282">MAEISAKLVKELREKTGAGMMDCKKALNENDGDLQKAIEWLRQKGIASAEKKSGRTAAEGLVGSYIHTGGRVGVLVEVNCETDFVARGDKFQELVRSIAMQIAACPNVEFVKVEDIPAEIAEREKAIEMGRDDLANKPENIREKIVVGRIEKRLKELTLLDQPYIRDPNISVAELVKQSIAELGENIQVRRFTRFVLGEGIEKAESDFAAEVAAQAAAAQS</sequence>
<protein>
    <recommendedName>
        <fullName evidence="1">Elongation factor Ts</fullName>
        <shortName evidence="1">EF-Ts</shortName>
    </recommendedName>
</protein>
<keyword id="KW-0963">Cytoplasm</keyword>
<keyword id="KW-0251">Elongation factor</keyword>
<keyword id="KW-0648">Protein biosynthesis</keyword>
<keyword id="KW-1185">Reference proteome</keyword>
<organism>
    <name type="scientific">Synechococcus elongatus (strain ATCC 33912 / PCC 7942 / FACHB-805)</name>
    <name type="common">Anacystis nidulans R2</name>
    <dbReference type="NCBI Taxonomy" id="1140"/>
    <lineage>
        <taxon>Bacteria</taxon>
        <taxon>Bacillati</taxon>
        <taxon>Cyanobacteriota</taxon>
        <taxon>Cyanophyceae</taxon>
        <taxon>Synechococcales</taxon>
        <taxon>Synechococcaceae</taxon>
        <taxon>Synechococcus</taxon>
    </lineage>
</organism>
<name>EFTS_SYNE7</name>
<accession>Q31K58</accession>
<comment type="function">
    <text evidence="1">Associates with the EF-Tu.GDP complex and induces the exchange of GDP to GTP. It remains bound to the aminoacyl-tRNA.EF-Tu.GTP complex up to the GTP hydrolysis stage on the ribosome.</text>
</comment>
<comment type="subcellular location">
    <subcellularLocation>
        <location evidence="1">Cytoplasm</location>
    </subcellularLocation>
</comment>
<comment type="similarity">
    <text evidence="1">Belongs to the EF-Ts family.</text>
</comment>
<reference key="1">
    <citation type="submission" date="2005-08" db="EMBL/GenBank/DDBJ databases">
        <title>Complete sequence of chromosome 1 of Synechococcus elongatus PCC 7942.</title>
        <authorList>
            <consortium name="US DOE Joint Genome Institute"/>
            <person name="Copeland A."/>
            <person name="Lucas S."/>
            <person name="Lapidus A."/>
            <person name="Barry K."/>
            <person name="Detter J.C."/>
            <person name="Glavina T."/>
            <person name="Hammon N."/>
            <person name="Israni S."/>
            <person name="Pitluck S."/>
            <person name="Schmutz J."/>
            <person name="Larimer F."/>
            <person name="Land M."/>
            <person name="Kyrpides N."/>
            <person name="Lykidis A."/>
            <person name="Golden S."/>
            <person name="Richardson P."/>
        </authorList>
    </citation>
    <scope>NUCLEOTIDE SEQUENCE [LARGE SCALE GENOMIC DNA]</scope>
    <source>
        <strain>ATCC 33912 / PCC 7942 / FACHB-805</strain>
    </source>
</reference>
<dbReference type="EMBL" id="CP000100">
    <property type="protein sequence ID" value="ABB58561.1"/>
    <property type="molecule type" value="Genomic_DNA"/>
</dbReference>
<dbReference type="RefSeq" id="WP_011243889.1">
    <property type="nucleotide sequence ID" value="NZ_JACJTX010000001.1"/>
</dbReference>
<dbReference type="SMR" id="Q31K58"/>
<dbReference type="STRING" id="1140.Synpcc7942_2531"/>
<dbReference type="PaxDb" id="1140-Synpcc7942_2531"/>
<dbReference type="GeneID" id="72431422"/>
<dbReference type="KEGG" id="syf:Synpcc7942_2531"/>
<dbReference type="eggNOG" id="COG0264">
    <property type="taxonomic scope" value="Bacteria"/>
</dbReference>
<dbReference type="HOGENOM" id="CLU_047155_1_1_3"/>
<dbReference type="OrthoDB" id="9808348at2"/>
<dbReference type="BioCyc" id="SYNEL:SYNPCC7942_2531-MONOMER"/>
<dbReference type="Proteomes" id="UP000889800">
    <property type="component" value="Chromosome"/>
</dbReference>
<dbReference type="GO" id="GO:0005737">
    <property type="term" value="C:cytoplasm"/>
    <property type="evidence" value="ECO:0007669"/>
    <property type="project" value="UniProtKB-SubCell"/>
</dbReference>
<dbReference type="GO" id="GO:0003746">
    <property type="term" value="F:translation elongation factor activity"/>
    <property type="evidence" value="ECO:0007669"/>
    <property type="project" value="UniProtKB-UniRule"/>
</dbReference>
<dbReference type="CDD" id="cd14275">
    <property type="entry name" value="UBA_EF-Ts"/>
    <property type="match status" value="1"/>
</dbReference>
<dbReference type="FunFam" id="1.10.286.20:FF:000001">
    <property type="entry name" value="Elongation factor Ts"/>
    <property type="match status" value="1"/>
</dbReference>
<dbReference type="FunFam" id="1.10.8.10:FF:000001">
    <property type="entry name" value="Elongation factor Ts"/>
    <property type="match status" value="1"/>
</dbReference>
<dbReference type="Gene3D" id="1.10.286.20">
    <property type="match status" value="1"/>
</dbReference>
<dbReference type="Gene3D" id="1.10.8.10">
    <property type="entry name" value="DNA helicase RuvA subunit, C-terminal domain"/>
    <property type="match status" value="1"/>
</dbReference>
<dbReference type="Gene3D" id="3.30.479.20">
    <property type="entry name" value="Elongation factor Ts, dimerisation domain"/>
    <property type="match status" value="1"/>
</dbReference>
<dbReference type="HAMAP" id="MF_00050">
    <property type="entry name" value="EF_Ts"/>
    <property type="match status" value="1"/>
</dbReference>
<dbReference type="InterPro" id="IPR036402">
    <property type="entry name" value="EF-Ts_dimer_sf"/>
</dbReference>
<dbReference type="InterPro" id="IPR001816">
    <property type="entry name" value="Transl_elong_EFTs/EF1B"/>
</dbReference>
<dbReference type="InterPro" id="IPR014039">
    <property type="entry name" value="Transl_elong_EFTs/EF1B_dimer"/>
</dbReference>
<dbReference type="InterPro" id="IPR018101">
    <property type="entry name" value="Transl_elong_Ts_CS"/>
</dbReference>
<dbReference type="InterPro" id="IPR009060">
    <property type="entry name" value="UBA-like_sf"/>
</dbReference>
<dbReference type="NCBIfam" id="TIGR00116">
    <property type="entry name" value="tsf"/>
    <property type="match status" value="2"/>
</dbReference>
<dbReference type="PANTHER" id="PTHR11741">
    <property type="entry name" value="ELONGATION FACTOR TS"/>
    <property type="match status" value="1"/>
</dbReference>
<dbReference type="PANTHER" id="PTHR11741:SF10">
    <property type="entry name" value="POLYPROTEIN OF EF-TS, CHLOROPLASTIC"/>
    <property type="match status" value="1"/>
</dbReference>
<dbReference type="Pfam" id="PF25025">
    <property type="entry name" value="EF-Ts_N"/>
    <property type="match status" value="1"/>
</dbReference>
<dbReference type="Pfam" id="PF00889">
    <property type="entry name" value="EF_TS"/>
    <property type="match status" value="1"/>
</dbReference>
<dbReference type="SUPFAM" id="SSF54713">
    <property type="entry name" value="Elongation factor Ts (EF-Ts), dimerisation domain"/>
    <property type="match status" value="1"/>
</dbReference>
<dbReference type="SUPFAM" id="SSF46934">
    <property type="entry name" value="UBA-like"/>
    <property type="match status" value="1"/>
</dbReference>
<dbReference type="PROSITE" id="PS01126">
    <property type="entry name" value="EF_TS_1"/>
    <property type="match status" value="1"/>
</dbReference>
<dbReference type="PROSITE" id="PS01127">
    <property type="entry name" value="EF_TS_2"/>
    <property type="match status" value="1"/>
</dbReference>
<feature type="chain" id="PRO_0000241543" description="Elongation factor Ts">
    <location>
        <begin position="1"/>
        <end position="221"/>
    </location>
</feature>
<feature type="region of interest" description="Involved in Mg(2+) ion dislocation from EF-Tu" evidence="1">
    <location>
        <begin position="82"/>
        <end position="85"/>
    </location>
</feature>
<evidence type="ECO:0000255" key="1">
    <source>
        <dbReference type="HAMAP-Rule" id="MF_00050"/>
    </source>
</evidence>
<gene>
    <name evidence="1" type="primary">tsf</name>
    <name type="ordered locus">Synpcc7942_2531</name>
</gene>
<proteinExistence type="inferred from homology"/>